<proteinExistence type="inferred from homology"/>
<protein>
    <recommendedName>
        <fullName evidence="2">Small ribosomal subunit protein uS12</fullName>
    </recommendedName>
    <alternativeName>
        <fullName evidence="3">30S ribosomal protein S12</fullName>
    </alternativeName>
</protein>
<accession>Q2SSX1</accession>
<comment type="function">
    <text evidence="2">With S4 and S5 plays an important role in translational accuracy.</text>
</comment>
<comment type="function">
    <text evidence="2">Interacts with and stabilizes bases of the 16S rRNA that are involved in tRNA selection in the A site and with the mRNA backbone. Located at the interface of the 30S and 50S subunits, it traverses the body of the 30S subunit contacting proteins on the other side and probably holding the rRNA structure together. The combined cluster of proteins S8, S12 and S17 appears to hold together the shoulder and platform of the 30S subunit.</text>
</comment>
<comment type="subunit">
    <text evidence="2">Part of the 30S ribosomal subunit. Contacts proteins S8 and S17. May interact with IF1 in the 30S initiation complex.</text>
</comment>
<comment type="similarity">
    <text evidence="2">Belongs to the universal ribosomal protein uS12 family.</text>
</comment>
<comment type="sequence caution" evidence="3">
    <conflict type="erroneous initiation">
        <sequence resource="EMBL-CDS" id="ABC01614"/>
    </conflict>
</comment>
<gene>
    <name evidence="2" type="primary">rpsL</name>
    <name type="ordered locus">MCAP_0151</name>
</gene>
<keyword id="KW-0488">Methylation</keyword>
<keyword id="KW-0687">Ribonucleoprotein</keyword>
<keyword id="KW-0689">Ribosomal protein</keyword>
<keyword id="KW-0694">RNA-binding</keyword>
<keyword id="KW-0699">rRNA-binding</keyword>
<keyword id="KW-0820">tRNA-binding</keyword>
<dbReference type="EMBL" id="CP000123">
    <property type="protein sequence ID" value="ABC01614.1"/>
    <property type="status" value="ALT_INIT"/>
    <property type="molecule type" value="Genomic_DNA"/>
</dbReference>
<dbReference type="RefSeq" id="WP_008362393.1">
    <property type="nucleotide sequence ID" value="NC_007633.1"/>
</dbReference>
<dbReference type="SMR" id="Q2SSX1"/>
<dbReference type="GeneID" id="93426637"/>
<dbReference type="KEGG" id="mcp:MCAP_0151"/>
<dbReference type="HOGENOM" id="CLU_104295_1_1_14"/>
<dbReference type="PhylomeDB" id="Q2SSX1"/>
<dbReference type="Proteomes" id="UP000001928">
    <property type="component" value="Chromosome"/>
</dbReference>
<dbReference type="GO" id="GO:0015935">
    <property type="term" value="C:small ribosomal subunit"/>
    <property type="evidence" value="ECO:0007669"/>
    <property type="project" value="InterPro"/>
</dbReference>
<dbReference type="GO" id="GO:0019843">
    <property type="term" value="F:rRNA binding"/>
    <property type="evidence" value="ECO:0007669"/>
    <property type="project" value="UniProtKB-UniRule"/>
</dbReference>
<dbReference type="GO" id="GO:0003735">
    <property type="term" value="F:structural constituent of ribosome"/>
    <property type="evidence" value="ECO:0007669"/>
    <property type="project" value="InterPro"/>
</dbReference>
<dbReference type="GO" id="GO:0000049">
    <property type="term" value="F:tRNA binding"/>
    <property type="evidence" value="ECO:0007669"/>
    <property type="project" value="UniProtKB-UniRule"/>
</dbReference>
<dbReference type="GO" id="GO:0006412">
    <property type="term" value="P:translation"/>
    <property type="evidence" value="ECO:0007669"/>
    <property type="project" value="UniProtKB-UniRule"/>
</dbReference>
<dbReference type="CDD" id="cd03368">
    <property type="entry name" value="Ribosomal_S12"/>
    <property type="match status" value="1"/>
</dbReference>
<dbReference type="FunFam" id="2.40.50.140:FF:000001">
    <property type="entry name" value="30S ribosomal protein S12"/>
    <property type="match status" value="1"/>
</dbReference>
<dbReference type="Gene3D" id="2.40.50.140">
    <property type="entry name" value="Nucleic acid-binding proteins"/>
    <property type="match status" value="1"/>
</dbReference>
<dbReference type="HAMAP" id="MF_00403_B">
    <property type="entry name" value="Ribosomal_uS12_B"/>
    <property type="match status" value="1"/>
</dbReference>
<dbReference type="InterPro" id="IPR012340">
    <property type="entry name" value="NA-bd_OB-fold"/>
</dbReference>
<dbReference type="InterPro" id="IPR006032">
    <property type="entry name" value="Ribosomal_uS12"/>
</dbReference>
<dbReference type="InterPro" id="IPR005679">
    <property type="entry name" value="Ribosomal_uS12_bac"/>
</dbReference>
<dbReference type="NCBIfam" id="TIGR00981">
    <property type="entry name" value="rpsL_bact"/>
    <property type="match status" value="1"/>
</dbReference>
<dbReference type="PANTHER" id="PTHR11652">
    <property type="entry name" value="30S RIBOSOMAL PROTEIN S12 FAMILY MEMBER"/>
    <property type="match status" value="1"/>
</dbReference>
<dbReference type="Pfam" id="PF00164">
    <property type="entry name" value="Ribosom_S12_S23"/>
    <property type="match status" value="1"/>
</dbReference>
<dbReference type="PIRSF" id="PIRSF002133">
    <property type="entry name" value="Ribosomal_S12/S23"/>
    <property type="match status" value="1"/>
</dbReference>
<dbReference type="PRINTS" id="PR01034">
    <property type="entry name" value="RIBOSOMALS12"/>
</dbReference>
<dbReference type="SUPFAM" id="SSF50249">
    <property type="entry name" value="Nucleic acid-binding proteins"/>
    <property type="match status" value="1"/>
</dbReference>
<dbReference type="PROSITE" id="PS00055">
    <property type="entry name" value="RIBOSOMAL_S12"/>
    <property type="match status" value="1"/>
</dbReference>
<evidence type="ECO:0000250" key="1"/>
<evidence type="ECO:0000255" key="2">
    <source>
        <dbReference type="HAMAP-Rule" id="MF_00403"/>
    </source>
</evidence>
<evidence type="ECO:0000305" key="3"/>
<feature type="chain" id="PRO_0000238135" description="Small ribosomal subunit protein uS12">
    <location>
        <begin position="1"/>
        <end position="139"/>
    </location>
</feature>
<feature type="modified residue" description="3-methylthioaspartic acid" evidence="1">
    <location>
        <position position="102"/>
    </location>
</feature>
<sequence length="139" mass="15489">MPTINQLVKVNRKAKTWKTKAPALNRGINTLIKKVTKIASPQKRGVCTRVATMTPKKPNSALRKYARVRLTNGMEVNAYIPGEGHNLQEHSVVLIRGGRVKDLPGVRYHVIRGTLDTQGVAKRSQGRSLYGVKRPKVKK</sequence>
<reference key="1">
    <citation type="submission" date="2005-09" db="EMBL/GenBank/DDBJ databases">
        <authorList>
            <person name="Glass J.I."/>
            <person name="Lartigue C."/>
            <person name="Pfannkoch C."/>
            <person name="Baden-Tillson H."/>
            <person name="Smith H.O."/>
            <person name="Venter J.C."/>
            <person name="Roske K."/>
            <person name="Wise K.S."/>
            <person name="Calcutt M.J."/>
            <person name="Nelson W.C."/>
            <person name="Nierman W.C."/>
        </authorList>
    </citation>
    <scope>NUCLEOTIDE SEQUENCE [LARGE SCALE GENOMIC DNA]</scope>
    <source>
        <strain>California kid / ATCC 27343 / NCTC 10154</strain>
    </source>
</reference>
<name>RS12_MYCCT</name>
<organism>
    <name type="scientific">Mycoplasma capricolum subsp. capricolum (strain California kid / ATCC 27343 / NCTC 10154)</name>
    <dbReference type="NCBI Taxonomy" id="340047"/>
    <lineage>
        <taxon>Bacteria</taxon>
        <taxon>Bacillati</taxon>
        <taxon>Mycoplasmatota</taxon>
        <taxon>Mollicutes</taxon>
        <taxon>Mycoplasmataceae</taxon>
        <taxon>Mycoplasma</taxon>
    </lineage>
</organism>